<protein>
    <recommendedName>
        <fullName evidence="1">Glutathione transport system permease protein GsiC</fullName>
    </recommendedName>
</protein>
<dbReference type="EMBL" id="CP000036">
    <property type="protein sequence ID" value="ABB65395.1"/>
    <property type="molecule type" value="Genomic_DNA"/>
</dbReference>
<dbReference type="RefSeq" id="WP_000936049.1">
    <property type="nucleotide sequence ID" value="NC_007613.1"/>
</dbReference>
<dbReference type="SMR" id="Q323W3"/>
<dbReference type="KEGG" id="sbo:SBO_0721"/>
<dbReference type="HOGENOM" id="CLU_036879_0_0_6"/>
<dbReference type="Proteomes" id="UP000007067">
    <property type="component" value="Chromosome"/>
</dbReference>
<dbReference type="GO" id="GO:0005886">
    <property type="term" value="C:plasma membrane"/>
    <property type="evidence" value="ECO:0007669"/>
    <property type="project" value="UniProtKB-SubCell"/>
</dbReference>
<dbReference type="GO" id="GO:0055085">
    <property type="term" value="P:transmembrane transport"/>
    <property type="evidence" value="ECO:0007669"/>
    <property type="project" value="InterPro"/>
</dbReference>
<dbReference type="CDD" id="cd06261">
    <property type="entry name" value="TM_PBP2"/>
    <property type="match status" value="1"/>
</dbReference>
<dbReference type="FunFam" id="1.10.3720.10:FF:000024">
    <property type="entry name" value="Glutathione ABC transporter permease GsiC"/>
    <property type="match status" value="1"/>
</dbReference>
<dbReference type="Gene3D" id="1.10.3720.10">
    <property type="entry name" value="MetI-like"/>
    <property type="match status" value="1"/>
</dbReference>
<dbReference type="InterPro" id="IPR045621">
    <property type="entry name" value="BPD_transp_1_N"/>
</dbReference>
<dbReference type="InterPro" id="IPR000515">
    <property type="entry name" value="MetI-like"/>
</dbReference>
<dbReference type="InterPro" id="IPR035906">
    <property type="entry name" value="MetI-like_sf"/>
</dbReference>
<dbReference type="NCBIfam" id="NF011661">
    <property type="entry name" value="PRK15081.1"/>
    <property type="match status" value="1"/>
</dbReference>
<dbReference type="PANTHER" id="PTHR43163">
    <property type="entry name" value="DIPEPTIDE TRANSPORT SYSTEM PERMEASE PROTEIN DPPB-RELATED"/>
    <property type="match status" value="1"/>
</dbReference>
<dbReference type="PANTHER" id="PTHR43163:SF5">
    <property type="entry name" value="GLUTATHIONE TRANSPORT SYSTEM PERMEASE PROTEIN GSIC"/>
    <property type="match status" value="1"/>
</dbReference>
<dbReference type="Pfam" id="PF00528">
    <property type="entry name" value="BPD_transp_1"/>
    <property type="match status" value="1"/>
</dbReference>
<dbReference type="Pfam" id="PF19300">
    <property type="entry name" value="BPD_transp_1_N"/>
    <property type="match status" value="1"/>
</dbReference>
<dbReference type="SUPFAM" id="SSF161098">
    <property type="entry name" value="MetI-like"/>
    <property type="match status" value="1"/>
</dbReference>
<dbReference type="PROSITE" id="PS50928">
    <property type="entry name" value="ABC_TM1"/>
    <property type="match status" value="1"/>
</dbReference>
<gene>
    <name evidence="1" type="primary">gsiC</name>
    <name type="ordered locus">SBO_0721</name>
</gene>
<keyword id="KW-0997">Cell inner membrane</keyword>
<keyword id="KW-1003">Cell membrane</keyword>
<keyword id="KW-0472">Membrane</keyword>
<keyword id="KW-0812">Transmembrane</keyword>
<keyword id="KW-1133">Transmembrane helix</keyword>
<keyword id="KW-0813">Transport</keyword>
<name>GSIC_SHIBS</name>
<feature type="chain" id="PRO_0000279997" description="Glutathione transport system permease protein GsiC">
    <location>
        <begin position="1"/>
        <end position="306"/>
    </location>
</feature>
<feature type="topological domain" description="Cytoplasmic" evidence="2">
    <location>
        <begin position="1"/>
        <end position="8"/>
    </location>
</feature>
<feature type="transmembrane region" description="Helical" evidence="3">
    <location>
        <begin position="9"/>
        <end position="29"/>
    </location>
</feature>
<feature type="topological domain" description="Periplasmic" evidence="2">
    <location>
        <begin position="30"/>
        <end position="102"/>
    </location>
</feature>
<feature type="transmembrane region" description="Helical" evidence="3">
    <location>
        <begin position="103"/>
        <end position="123"/>
    </location>
</feature>
<feature type="topological domain" description="Cytoplasmic" evidence="2">
    <location>
        <begin position="124"/>
        <end position="134"/>
    </location>
</feature>
<feature type="transmembrane region" description="Helical" evidence="3">
    <location>
        <begin position="135"/>
        <end position="155"/>
    </location>
</feature>
<feature type="topological domain" description="Periplasmic" evidence="2">
    <location>
        <begin position="156"/>
        <end position="168"/>
    </location>
</feature>
<feature type="transmembrane region" description="Helical" evidence="3">
    <location>
        <begin position="169"/>
        <end position="189"/>
    </location>
</feature>
<feature type="topological domain" description="Cytoplasmic" evidence="2">
    <location>
        <begin position="190"/>
        <end position="228"/>
    </location>
</feature>
<feature type="transmembrane region" description="Helical" evidence="3">
    <location>
        <begin position="229"/>
        <end position="249"/>
    </location>
</feature>
<feature type="topological domain" description="Periplasmic" evidence="2">
    <location>
        <begin position="250"/>
        <end position="277"/>
    </location>
</feature>
<feature type="transmembrane region" description="Helical" evidence="3">
    <location>
        <begin position="278"/>
        <end position="298"/>
    </location>
</feature>
<feature type="topological domain" description="Cytoplasmic" evidence="2">
    <location>
        <begin position="299"/>
        <end position="306"/>
    </location>
</feature>
<feature type="domain" description="ABC transmembrane type-1" evidence="3">
    <location>
        <begin position="95"/>
        <end position="292"/>
    </location>
</feature>
<proteinExistence type="inferred from homology"/>
<evidence type="ECO:0000250" key="1">
    <source>
        <dbReference type="UniProtKB" id="P75798"/>
    </source>
</evidence>
<evidence type="ECO:0000255" key="2"/>
<evidence type="ECO:0000255" key="3">
    <source>
        <dbReference type="PROSITE-ProRule" id="PRU00441"/>
    </source>
</evidence>
<evidence type="ECO:0000305" key="4"/>
<reference key="1">
    <citation type="journal article" date="2005" name="Nucleic Acids Res.">
        <title>Genome dynamics and diversity of Shigella species, the etiologic agents of bacillary dysentery.</title>
        <authorList>
            <person name="Yang F."/>
            <person name="Yang J."/>
            <person name="Zhang X."/>
            <person name="Chen L."/>
            <person name="Jiang Y."/>
            <person name="Yan Y."/>
            <person name="Tang X."/>
            <person name="Wang J."/>
            <person name="Xiong Z."/>
            <person name="Dong J."/>
            <person name="Xue Y."/>
            <person name="Zhu Y."/>
            <person name="Xu X."/>
            <person name="Sun L."/>
            <person name="Chen S."/>
            <person name="Nie H."/>
            <person name="Peng J."/>
            <person name="Xu J."/>
            <person name="Wang Y."/>
            <person name="Yuan Z."/>
            <person name="Wen Y."/>
            <person name="Yao Z."/>
            <person name="Shen Y."/>
            <person name="Qiang B."/>
            <person name="Hou Y."/>
            <person name="Yu J."/>
            <person name="Jin Q."/>
        </authorList>
    </citation>
    <scope>NUCLEOTIDE SEQUENCE [LARGE SCALE GENOMIC DNA]</scope>
    <source>
        <strain>Sb227</strain>
    </source>
</reference>
<comment type="function">
    <text evidence="1">Part of the ABC transporter complex GsiABCD involved in glutathione import. Probably responsible for the translocation of the substrate across the membrane.</text>
</comment>
<comment type="subunit">
    <text evidence="1">The complex is composed of two ATP-binding proteins (GsiA), two transmembrane proteins (GsiC and GsiD) and a solute-binding protein (GsiB).</text>
</comment>
<comment type="subcellular location">
    <subcellularLocation>
        <location evidence="1">Cell inner membrane</location>
        <topology evidence="2">Multi-pass membrane protein</topology>
    </subcellularLocation>
</comment>
<comment type="similarity">
    <text evidence="4">Belongs to the binding-protein-dependent transport system permease family.</text>
</comment>
<organism>
    <name type="scientific">Shigella boydii serotype 4 (strain Sb227)</name>
    <dbReference type="NCBI Taxonomy" id="300268"/>
    <lineage>
        <taxon>Bacteria</taxon>
        <taxon>Pseudomonadati</taxon>
        <taxon>Pseudomonadota</taxon>
        <taxon>Gammaproteobacteria</taxon>
        <taxon>Enterobacterales</taxon>
        <taxon>Enterobacteriaceae</taxon>
        <taxon>Shigella</taxon>
    </lineage>
</organism>
<sequence length="306" mass="34056">MLNYVIKRLLGLIPTLFIVSVLVFLFVHMLPGDPARLIAGPEADAQVIELVRQQLGLDQPLYHQFWHYISNAVQGDFGLSMVSRRPVADEIASRFMPTLWLTITSMVWAVIFGMAAGIIAAVWRNRWPDRLSMTIAVSGISFPAFALGMLLIQVFSVELGWLPTVGADSWQHYILSSLTLGAAVAAVMARFTRASFVDVLSEDYMRTARAKGVSETWVVLKHGLRNAMIPVVTMMGLQFGFLLGGSIVVEKVFNWPGLGRLLVDSVEMRDYPVIQAEILLFSLEFILINLVVDVLYAAINPAIRYK</sequence>
<accession>Q323W3</accession>